<keyword id="KW-0169">Cobalamin biosynthesis</keyword>
<keyword id="KW-0378">Hydrolase</keyword>
<feature type="chain" id="PRO_0000179955" description="Adenosylcobalamin/alpha-ribazole phosphatase">
    <location>
        <begin position="1"/>
        <end position="202"/>
    </location>
</feature>
<feature type="active site" description="Tele-phosphohistidine intermediate" evidence="2">
    <location>
        <position position="8"/>
    </location>
</feature>
<feature type="active site" description="Proton donor/acceptor" evidence="2">
    <location>
        <position position="81"/>
    </location>
</feature>
<feature type="sequence conflict" description="In Ref. 2; AAO69827." evidence="3" ref="2">
    <original>V</original>
    <variation>G</variation>
    <location>
        <position position="85"/>
    </location>
</feature>
<accession>P58652</accession>
<proteinExistence type="inferred from homology"/>
<comment type="function">
    <text evidence="1">Catalyzes the conversion of adenosylcobalamin 5'-phosphate to adenosylcobalamin (vitamin B12); involved in the assembly of the nucleotide loop of cobalamin. Also catalyzes the hydrolysis of the phospho group from alpha-ribazole 5'-phosphate to form alpha-ribazole.</text>
</comment>
<comment type="catalytic activity">
    <reaction evidence="1">
        <text>adenosylcob(III)alamin 5'-phosphate + H2O = adenosylcob(III)alamin + phosphate</text>
        <dbReference type="Rhea" id="RHEA:30367"/>
        <dbReference type="ChEBI" id="CHEBI:15377"/>
        <dbReference type="ChEBI" id="CHEBI:18408"/>
        <dbReference type="ChEBI" id="CHEBI:43474"/>
        <dbReference type="ChEBI" id="CHEBI:60493"/>
        <dbReference type="EC" id="3.1.3.73"/>
    </reaction>
</comment>
<comment type="catalytic activity">
    <reaction evidence="1">
        <text>alpha-ribazole 5'-phosphate + H2O = alpha-ribazole + phosphate</text>
        <dbReference type="Rhea" id="RHEA:24456"/>
        <dbReference type="ChEBI" id="CHEBI:10329"/>
        <dbReference type="ChEBI" id="CHEBI:15377"/>
        <dbReference type="ChEBI" id="CHEBI:43474"/>
        <dbReference type="ChEBI" id="CHEBI:57918"/>
        <dbReference type="EC" id="3.1.3.73"/>
    </reaction>
</comment>
<comment type="pathway">
    <text>Nucleoside biosynthesis; alpha-ribazole biosynthesis; alpha-ribazole from 5,6-dimethylbenzimidazole: step 2/2.</text>
</comment>
<comment type="similarity">
    <text evidence="3">Belongs to the phosphoglycerate mutase family.</text>
</comment>
<dbReference type="EC" id="3.1.3.73" evidence="1"/>
<dbReference type="EMBL" id="AL513382">
    <property type="protein sequence ID" value="CAD05120.1"/>
    <property type="molecule type" value="Genomic_DNA"/>
</dbReference>
<dbReference type="EMBL" id="AE014613">
    <property type="protein sequence ID" value="AAO69827.1"/>
    <property type="molecule type" value="Genomic_DNA"/>
</dbReference>
<dbReference type="RefSeq" id="NP_455219.1">
    <property type="nucleotide sequence ID" value="NC_003198.1"/>
</dbReference>
<dbReference type="RefSeq" id="WP_001241920.1">
    <property type="nucleotide sequence ID" value="NZ_QXGZ01000014.1"/>
</dbReference>
<dbReference type="SMR" id="P58652"/>
<dbReference type="STRING" id="220341.gene:17584701"/>
<dbReference type="KEGG" id="stt:t2224"/>
<dbReference type="KEGG" id="sty:STY0694"/>
<dbReference type="PATRIC" id="fig|220341.7.peg.698"/>
<dbReference type="eggNOG" id="COG0406">
    <property type="taxonomic scope" value="Bacteria"/>
</dbReference>
<dbReference type="HOGENOM" id="CLU_033323_8_4_6"/>
<dbReference type="OMA" id="WLTEPAW"/>
<dbReference type="UniPathway" id="UPA00061">
    <property type="reaction ID" value="UER00517"/>
</dbReference>
<dbReference type="Proteomes" id="UP000000541">
    <property type="component" value="Chromosome"/>
</dbReference>
<dbReference type="Proteomes" id="UP000002670">
    <property type="component" value="Chromosome"/>
</dbReference>
<dbReference type="GO" id="GO:0005737">
    <property type="term" value="C:cytoplasm"/>
    <property type="evidence" value="ECO:0007669"/>
    <property type="project" value="TreeGrafter"/>
</dbReference>
<dbReference type="GO" id="GO:0043755">
    <property type="term" value="F:alpha-ribazole phosphatase activity"/>
    <property type="evidence" value="ECO:0007669"/>
    <property type="project" value="UniProtKB-EC"/>
</dbReference>
<dbReference type="GO" id="GO:0009236">
    <property type="term" value="P:cobalamin biosynthetic process"/>
    <property type="evidence" value="ECO:0007669"/>
    <property type="project" value="UniProtKB-KW"/>
</dbReference>
<dbReference type="CDD" id="cd07067">
    <property type="entry name" value="HP_PGM_like"/>
    <property type="match status" value="1"/>
</dbReference>
<dbReference type="Gene3D" id="3.40.50.1240">
    <property type="entry name" value="Phosphoglycerate mutase-like"/>
    <property type="match status" value="1"/>
</dbReference>
<dbReference type="InterPro" id="IPR013078">
    <property type="entry name" value="His_Pase_superF_clade-1"/>
</dbReference>
<dbReference type="InterPro" id="IPR029033">
    <property type="entry name" value="His_PPase_superfam"/>
</dbReference>
<dbReference type="InterPro" id="IPR001345">
    <property type="entry name" value="PG/BPGM_mutase_AS"/>
</dbReference>
<dbReference type="InterPro" id="IPR050275">
    <property type="entry name" value="PGM_Phosphatase"/>
</dbReference>
<dbReference type="InterPro" id="IPR017578">
    <property type="entry name" value="Ribazole_CobC"/>
</dbReference>
<dbReference type="NCBIfam" id="NF011580">
    <property type="entry name" value="PRK15004.1"/>
    <property type="match status" value="1"/>
</dbReference>
<dbReference type="NCBIfam" id="TIGR03162">
    <property type="entry name" value="ribazole_cobC"/>
    <property type="match status" value="1"/>
</dbReference>
<dbReference type="PANTHER" id="PTHR48100:SF59">
    <property type="entry name" value="ADENOSYLCOBALAMIN_ALPHA-RIBAZOLE PHOSPHATASE"/>
    <property type="match status" value="1"/>
</dbReference>
<dbReference type="PANTHER" id="PTHR48100">
    <property type="entry name" value="BROAD-SPECIFICITY PHOSPHATASE YOR283W-RELATED"/>
    <property type="match status" value="1"/>
</dbReference>
<dbReference type="Pfam" id="PF00300">
    <property type="entry name" value="His_Phos_1"/>
    <property type="match status" value="1"/>
</dbReference>
<dbReference type="PIRSF" id="PIRSF000709">
    <property type="entry name" value="6PFK_2-Ptase"/>
    <property type="match status" value="1"/>
</dbReference>
<dbReference type="SMART" id="SM00855">
    <property type="entry name" value="PGAM"/>
    <property type="match status" value="1"/>
</dbReference>
<dbReference type="SUPFAM" id="SSF53254">
    <property type="entry name" value="Phosphoglycerate mutase-like"/>
    <property type="match status" value="1"/>
</dbReference>
<dbReference type="PROSITE" id="PS00175">
    <property type="entry name" value="PG_MUTASE"/>
    <property type="match status" value="1"/>
</dbReference>
<evidence type="ECO:0000250" key="1">
    <source>
        <dbReference type="UniProtKB" id="P39701"/>
    </source>
</evidence>
<evidence type="ECO:0000250" key="2">
    <source>
        <dbReference type="UniProtKB" id="P62707"/>
    </source>
</evidence>
<evidence type="ECO:0000305" key="3"/>
<organism>
    <name type="scientific">Salmonella typhi</name>
    <dbReference type="NCBI Taxonomy" id="90370"/>
    <lineage>
        <taxon>Bacteria</taxon>
        <taxon>Pseudomonadati</taxon>
        <taxon>Pseudomonadota</taxon>
        <taxon>Gammaproteobacteria</taxon>
        <taxon>Enterobacterales</taxon>
        <taxon>Enterobacteriaceae</taxon>
        <taxon>Salmonella</taxon>
    </lineage>
</organism>
<gene>
    <name type="primary">cobC</name>
    <name type="ordered locus">STY0694</name>
    <name type="ordered locus">t2224</name>
</gene>
<sequence length="202" mass="23109">MRLWLVRHGETEANVAGLYSGHAPTPLTEKGIGQAKTLHTLLRHAPFDRVLCSELERARHTARLVLEGRDTPQHILPELNEMYFVDWEMRHHRDLTHEDAESYAAWCTDWQNAVPTNGEGFQAFTRRVERFISRLGAFSDCQNLLIVSHQGVLSLLIARLLAMPAASLWHFRVEQGCWSTIDICEGFATLKVLNSRAVWRPE</sequence>
<protein>
    <recommendedName>
        <fullName>Adenosylcobalamin/alpha-ribazole phosphatase</fullName>
        <ecNumber evidence="1">3.1.3.73</ecNumber>
    </recommendedName>
    <alternativeName>
        <fullName>Adenosylcobalamin phosphatase</fullName>
    </alternativeName>
    <alternativeName>
        <fullName>Alpha-ribazole-5'-phosphate phosphatase</fullName>
    </alternativeName>
</protein>
<reference key="1">
    <citation type="journal article" date="2001" name="Nature">
        <title>Complete genome sequence of a multiple drug resistant Salmonella enterica serovar Typhi CT18.</title>
        <authorList>
            <person name="Parkhill J."/>
            <person name="Dougan G."/>
            <person name="James K.D."/>
            <person name="Thomson N.R."/>
            <person name="Pickard D."/>
            <person name="Wain J."/>
            <person name="Churcher C.M."/>
            <person name="Mungall K.L."/>
            <person name="Bentley S.D."/>
            <person name="Holden M.T.G."/>
            <person name="Sebaihia M."/>
            <person name="Baker S."/>
            <person name="Basham D."/>
            <person name="Brooks K."/>
            <person name="Chillingworth T."/>
            <person name="Connerton P."/>
            <person name="Cronin A."/>
            <person name="Davis P."/>
            <person name="Davies R.M."/>
            <person name="Dowd L."/>
            <person name="White N."/>
            <person name="Farrar J."/>
            <person name="Feltwell T."/>
            <person name="Hamlin N."/>
            <person name="Haque A."/>
            <person name="Hien T.T."/>
            <person name="Holroyd S."/>
            <person name="Jagels K."/>
            <person name="Krogh A."/>
            <person name="Larsen T.S."/>
            <person name="Leather S."/>
            <person name="Moule S."/>
            <person name="O'Gaora P."/>
            <person name="Parry C."/>
            <person name="Quail M.A."/>
            <person name="Rutherford K.M."/>
            <person name="Simmonds M."/>
            <person name="Skelton J."/>
            <person name="Stevens K."/>
            <person name="Whitehead S."/>
            <person name="Barrell B.G."/>
        </authorList>
    </citation>
    <scope>NUCLEOTIDE SEQUENCE [LARGE SCALE GENOMIC DNA]</scope>
    <source>
        <strain>CT18</strain>
    </source>
</reference>
<reference key="2">
    <citation type="journal article" date="2003" name="J. Bacteriol.">
        <title>Comparative genomics of Salmonella enterica serovar Typhi strains Ty2 and CT18.</title>
        <authorList>
            <person name="Deng W."/>
            <person name="Liou S.-R."/>
            <person name="Plunkett G. III"/>
            <person name="Mayhew G.F."/>
            <person name="Rose D.J."/>
            <person name="Burland V."/>
            <person name="Kodoyianni V."/>
            <person name="Schwartz D.C."/>
            <person name="Blattner F.R."/>
        </authorList>
    </citation>
    <scope>NUCLEOTIDE SEQUENCE [LARGE SCALE GENOMIC DNA]</scope>
    <source>
        <strain>ATCC 700931 / Ty2</strain>
    </source>
</reference>
<name>COBC_SALTI</name>